<reference key="1">
    <citation type="journal article" date="1994" name="Oncogene">
        <title>Activation of the K-ras gene by insertion mutations in chemically induced rat renal mesenchymal tumors.</title>
        <authorList>
            <person name="Higinbotham K.G."/>
            <person name="Rice J.M."/>
            <person name="Buzard G.S."/>
            <person name="Perantoni A.O."/>
        </authorList>
    </citation>
    <scope>NUCLEOTIDE SEQUENCE [MRNA] (ISOFORM 2B)</scope>
    <scope>MUTAGENESIS</scope>
    <scope>FUNCTION</scope>
    <source>
        <strain>Noble</strain>
        <tissue>Kidney</tissue>
    </source>
</reference>
<reference key="2">
    <citation type="journal article" date="2004" name="Nature">
        <title>Genome sequence of the Brown Norway rat yields insights into mammalian evolution.</title>
        <authorList>
            <person name="Gibbs R.A."/>
            <person name="Weinstock G.M."/>
            <person name="Metzker M.L."/>
            <person name="Muzny D.M."/>
            <person name="Sodergren E.J."/>
            <person name="Scherer S."/>
            <person name="Scott G."/>
            <person name="Steffen D."/>
            <person name="Worley K.C."/>
            <person name="Burch P.E."/>
            <person name="Okwuonu G."/>
            <person name="Hines S."/>
            <person name="Lewis L."/>
            <person name="Deramo C."/>
            <person name="Delgado O."/>
            <person name="Dugan-Rocha S."/>
            <person name="Miner G."/>
            <person name="Morgan M."/>
            <person name="Hawes A."/>
            <person name="Gill R."/>
            <person name="Holt R.A."/>
            <person name="Adams M.D."/>
            <person name="Amanatides P.G."/>
            <person name="Baden-Tillson H."/>
            <person name="Barnstead M."/>
            <person name="Chin S."/>
            <person name="Evans C.A."/>
            <person name="Ferriera S."/>
            <person name="Fosler C."/>
            <person name="Glodek A."/>
            <person name="Gu Z."/>
            <person name="Jennings D."/>
            <person name="Kraft C.L."/>
            <person name="Nguyen T."/>
            <person name="Pfannkoch C.M."/>
            <person name="Sitter C."/>
            <person name="Sutton G.G."/>
            <person name="Venter J.C."/>
            <person name="Woodage T."/>
            <person name="Smith D."/>
            <person name="Lee H.-M."/>
            <person name="Gustafson E."/>
            <person name="Cahill P."/>
            <person name="Kana A."/>
            <person name="Doucette-Stamm L."/>
            <person name="Weinstock K."/>
            <person name="Fechtel K."/>
            <person name="Weiss R.B."/>
            <person name="Dunn D.M."/>
            <person name="Green E.D."/>
            <person name="Blakesley R.W."/>
            <person name="Bouffard G.G."/>
            <person name="De Jong P.J."/>
            <person name="Osoegawa K."/>
            <person name="Zhu B."/>
            <person name="Marra M."/>
            <person name="Schein J."/>
            <person name="Bosdet I."/>
            <person name="Fjell C."/>
            <person name="Jones S."/>
            <person name="Krzywinski M."/>
            <person name="Mathewson C."/>
            <person name="Siddiqui A."/>
            <person name="Wye N."/>
            <person name="McPherson J."/>
            <person name="Zhao S."/>
            <person name="Fraser C.M."/>
            <person name="Shetty J."/>
            <person name="Shatsman S."/>
            <person name="Geer K."/>
            <person name="Chen Y."/>
            <person name="Abramzon S."/>
            <person name="Nierman W.C."/>
            <person name="Havlak P.H."/>
            <person name="Chen R."/>
            <person name="Durbin K.J."/>
            <person name="Egan A."/>
            <person name="Ren Y."/>
            <person name="Song X.-Z."/>
            <person name="Li B."/>
            <person name="Liu Y."/>
            <person name="Qin X."/>
            <person name="Cawley S."/>
            <person name="Cooney A.J."/>
            <person name="D'Souza L.M."/>
            <person name="Martin K."/>
            <person name="Wu J.Q."/>
            <person name="Gonzalez-Garay M.L."/>
            <person name="Jackson A.R."/>
            <person name="Kalafus K.J."/>
            <person name="McLeod M.P."/>
            <person name="Milosavljevic A."/>
            <person name="Virk D."/>
            <person name="Volkov A."/>
            <person name="Wheeler D.A."/>
            <person name="Zhang Z."/>
            <person name="Bailey J.A."/>
            <person name="Eichler E.E."/>
            <person name="Tuzun E."/>
            <person name="Birney E."/>
            <person name="Mongin E."/>
            <person name="Ureta-Vidal A."/>
            <person name="Woodwark C."/>
            <person name="Zdobnov E."/>
            <person name="Bork P."/>
            <person name="Suyama M."/>
            <person name="Torrents D."/>
            <person name="Alexandersson M."/>
            <person name="Trask B.J."/>
            <person name="Young J.M."/>
            <person name="Huang H."/>
            <person name="Wang H."/>
            <person name="Xing H."/>
            <person name="Daniels S."/>
            <person name="Gietzen D."/>
            <person name="Schmidt J."/>
            <person name="Stevens K."/>
            <person name="Vitt U."/>
            <person name="Wingrove J."/>
            <person name="Camara F."/>
            <person name="Mar Alba M."/>
            <person name="Abril J.F."/>
            <person name="Guigo R."/>
            <person name="Smit A."/>
            <person name="Dubchak I."/>
            <person name="Rubin E.M."/>
            <person name="Couronne O."/>
            <person name="Poliakov A."/>
            <person name="Huebner N."/>
            <person name="Ganten D."/>
            <person name="Goesele C."/>
            <person name="Hummel O."/>
            <person name="Kreitler T."/>
            <person name="Lee Y.-A."/>
            <person name="Monti J."/>
            <person name="Schulz H."/>
            <person name="Zimdahl H."/>
            <person name="Himmelbauer H."/>
            <person name="Lehrach H."/>
            <person name="Jacob H.J."/>
            <person name="Bromberg S."/>
            <person name="Gullings-Handley J."/>
            <person name="Jensen-Seaman M.I."/>
            <person name="Kwitek A.E."/>
            <person name="Lazar J."/>
            <person name="Pasko D."/>
            <person name="Tonellato P.J."/>
            <person name="Twigger S."/>
            <person name="Ponting C.P."/>
            <person name="Duarte J.M."/>
            <person name="Rice S."/>
            <person name="Goodstadt L."/>
            <person name="Beatson S.A."/>
            <person name="Emes R.D."/>
            <person name="Winter E.E."/>
            <person name="Webber C."/>
            <person name="Brandt P."/>
            <person name="Nyakatura G."/>
            <person name="Adetobi M."/>
            <person name="Chiaromonte F."/>
            <person name="Elnitski L."/>
            <person name="Eswara P."/>
            <person name="Hardison R.C."/>
            <person name="Hou M."/>
            <person name="Kolbe D."/>
            <person name="Makova K."/>
            <person name="Miller W."/>
            <person name="Nekrutenko A."/>
            <person name="Riemer C."/>
            <person name="Schwartz S."/>
            <person name="Taylor J."/>
            <person name="Yang S."/>
            <person name="Zhang Y."/>
            <person name="Lindpaintner K."/>
            <person name="Andrews T.D."/>
            <person name="Caccamo M."/>
            <person name="Clamp M."/>
            <person name="Clarke L."/>
            <person name="Curwen V."/>
            <person name="Durbin R.M."/>
            <person name="Eyras E."/>
            <person name="Searle S.M."/>
            <person name="Cooper G.M."/>
            <person name="Batzoglou S."/>
            <person name="Brudno M."/>
            <person name="Sidow A."/>
            <person name="Stone E.A."/>
            <person name="Payseur B.A."/>
            <person name="Bourque G."/>
            <person name="Lopez-Otin C."/>
            <person name="Puente X.S."/>
            <person name="Chakrabarti K."/>
            <person name="Chatterji S."/>
            <person name="Dewey C."/>
            <person name="Pachter L."/>
            <person name="Bray N."/>
            <person name="Yap V.B."/>
            <person name="Caspi A."/>
            <person name="Tesler G."/>
            <person name="Pevzner P.A."/>
            <person name="Haussler D."/>
            <person name="Roskin K.M."/>
            <person name="Baertsch R."/>
            <person name="Clawson H."/>
            <person name="Furey T.S."/>
            <person name="Hinrichs A.S."/>
            <person name="Karolchik D."/>
            <person name="Kent W.J."/>
            <person name="Rosenbloom K.R."/>
            <person name="Trumbower H."/>
            <person name="Weirauch M."/>
            <person name="Cooper D.N."/>
            <person name="Stenson P.D."/>
            <person name="Ma B."/>
            <person name="Brent M."/>
            <person name="Arumugam M."/>
            <person name="Shteynberg D."/>
            <person name="Copley R.R."/>
            <person name="Taylor M.S."/>
            <person name="Riethman H."/>
            <person name="Mudunuri U."/>
            <person name="Peterson J."/>
            <person name="Guyer M."/>
            <person name="Felsenfeld A."/>
            <person name="Old S."/>
            <person name="Mockrin S."/>
            <person name="Collins F.S."/>
        </authorList>
    </citation>
    <scope>NUCLEOTIDE SEQUENCE [LARGE SCALE GENOMIC DNA]</scope>
    <source>
        <strain>Brown Norway</strain>
    </source>
</reference>
<reference key="3">
    <citation type="journal article" date="1986" name="Mol. Cell. Biol.">
        <title>Structure of the c-Ki-ras gene in a rat fibrosarcoma induced by 1,8-dinitropyrene.</title>
        <authorList>
            <person name="Tahira T."/>
            <person name="Hayashi K."/>
            <person name="Ochiai M."/>
            <person name="Tsuchida N."/>
            <person name="Nagao M."/>
            <person name="Sugimura T."/>
        </authorList>
    </citation>
    <scope>NUCLEOTIDE SEQUENCE [GENOMIC DNA] OF 1-96</scope>
</reference>
<reference key="4">
    <citation type="journal article" date="1986" name="Bull. Tokyo Med. Dent. Univ.">
        <title>Nucleotide sequence of exon I of the rat c-K-ras gene.</title>
        <authorList>
            <person name="Iritani A."/>
            <person name="Katayama N."/>
            <person name="Tahira T."/>
            <person name="Hayashi K."/>
            <person name="Tsuchida N."/>
        </authorList>
    </citation>
    <scope>NUCLEOTIDE SEQUENCE OF 1-37</scope>
</reference>
<reference key="5">
    <citation type="journal article" date="1987" name="Proc. Natl. Acad. Sci. U.S.A.">
        <title>Characterization of c-Ki-ras oncogene alleles by direct sequencing of enzymatically amplified DNA from carcinogen-induced tumors.</title>
        <authorList>
            <person name="McMahon G."/>
            <person name="Davis E."/>
            <person name="Wogan G.N."/>
        </authorList>
    </citation>
    <scope>NUCLEOTIDE SEQUENCE [GENOMIC DNA] OF 1-28</scope>
    <scope>FUNCTION</scope>
</reference>
<reference key="6">
    <citation type="journal article" date="2003" name="J. Biol. Chem.">
        <title>Suprachiasmatic nucleus circadian oscillatory protein, a novel binding partner of K-Ras in the membrane rafts, negatively regulates MAPK pathway.</title>
        <authorList>
            <person name="Shimizu K."/>
            <person name="Okada M."/>
            <person name="Nagai K."/>
            <person name="Fukada Y."/>
        </authorList>
    </citation>
    <scope>INTERACTION WITH PHLPP</scope>
</reference>
<reference key="7">
    <citation type="journal article" date="2009" name="PLoS ONE">
        <title>Regulator of G-protein signaling 14 (RGS14) is a selective H-Ras effector.</title>
        <authorList>
            <person name="Willard F.S."/>
            <person name="Willard M.D."/>
            <person name="Kimple A.J."/>
            <person name="Soundararajan M."/>
            <person name="Oestreich E.A."/>
            <person name="Li X."/>
            <person name="Sowa N.A."/>
            <person name="Kimple R.J."/>
            <person name="Doyle D.A."/>
            <person name="Der C.J."/>
            <person name="Zylka M.J."/>
            <person name="Snider W.D."/>
            <person name="Siderovski D.P."/>
        </authorList>
    </citation>
    <scope>INTERACTION WITH RGS14</scope>
</reference>
<feature type="chain" id="PRO_0000326483" description="GTPase KRas">
    <location>
        <begin position="1"/>
        <end position="186"/>
    </location>
</feature>
<feature type="initiator methionine" description="Removed; alternate" evidence="2">
    <location>
        <position position="1"/>
    </location>
</feature>
<feature type="chain" id="PRO_0000082644" description="GTPase KRas, N-terminally processed">
    <location>
        <begin position="2"/>
        <end position="186"/>
    </location>
</feature>
<feature type="propeptide" id="PRO_0000281294" description="Removed in mature form" evidence="2">
    <location>
        <begin position="187"/>
        <end position="189"/>
    </location>
</feature>
<feature type="region of interest" description="Hypervariable region">
    <location>
        <begin position="166"/>
        <end position="185"/>
    </location>
</feature>
<feature type="short sequence motif" description="Effector region">
    <location>
        <begin position="32"/>
        <end position="40"/>
    </location>
</feature>
<feature type="binding site" evidence="2">
    <location>
        <begin position="10"/>
        <end position="18"/>
    </location>
    <ligand>
        <name>GTP</name>
        <dbReference type="ChEBI" id="CHEBI:37565"/>
    </ligand>
</feature>
<feature type="binding site" evidence="2">
    <location>
        <begin position="29"/>
        <end position="35"/>
    </location>
    <ligand>
        <name>GTP</name>
        <dbReference type="ChEBI" id="CHEBI:37565"/>
    </ligand>
</feature>
<feature type="binding site" evidence="2">
    <location>
        <begin position="59"/>
        <end position="60"/>
    </location>
    <ligand>
        <name>GTP</name>
        <dbReference type="ChEBI" id="CHEBI:37565"/>
    </ligand>
</feature>
<feature type="binding site" evidence="2">
    <location>
        <begin position="116"/>
        <end position="119"/>
    </location>
    <ligand>
        <name>GTP</name>
        <dbReference type="ChEBI" id="CHEBI:37565"/>
    </ligand>
</feature>
<feature type="modified residue" description="N-acetylmethionine" evidence="2">
    <location>
        <position position="1"/>
    </location>
</feature>
<feature type="modified residue" description="N-acetylthreonine; in GTPase KRas, N-terminally processed" evidence="2">
    <location>
        <position position="2"/>
    </location>
</feature>
<feature type="modified residue" description="N6-acetyllysine" evidence="2">
    <location>
        <position position="104"/>
    </location>
</feature>
<feature type="modified residue" description="Cysteine methyl ester" evidence="2">
    <location>
        <position position="186"/>
    </location>
</feature>
<feature type="lipid moiety-binding region" description="S-palmitoyl cysteine" evidence="2">
    <location>
        <position position="180"/>
    </location>
</feature>
<feature type="lipid moiety-binding region" description="N6-palmitoyl lysine" evidence="2">
    <location>
        <position position="182"/>
    </location>
</feature>
<feature type="lipid moiety-binding region" description="N6-palmitoyl lysine" evidence="2">
    <location>
        <position position="184"/>
    </location>
</feature>
<feature type="lipid moiety-binding region" description="N6-palmitoyl lysine" evidence="2">
    <location>
        <position position="185"/>
    </location>
</feature>
<feature type="lipid moiety-binding region" description="S-farnesyl cysteine" evidence="2">
    <location>
        <position position="186"/>
    </location>
</feature>
<feature type="cross-link" description="Glycyl lysine isopeptide (Lys-Gly) (interchain with G-Cter in ubiquitin)" evidence="2">
    <location>
        <position position="170"/>
    </location>
</feature>
<feature type="splice variant" id="VSP_011144" description="In isoform 2B." evidence="6">
    <original>RVE</original>
    <variation>GVD</variation>
    <location>
        <begin position="151"/>
        <end position="153"/>
    </location>
</feature>
<feature type="splice variant" id="VSP_011145" description="In isoform 2B." evidence="6">
    <original>QYRLKKISKEEKTPGCVKIKKCVIM</original>
    <variation>KHKEKMSKDGKKKKKKSRTRCIVM</variation>
    <location>
        <begin position="165"/>
        <end position="189"/>
    </location>
</feature>
<feature type="sequence conflict" description="In Ref. 3; AAA42011." evidence="7" ref="3">
    <original>G</original>
    <variation>C</variation>
    <location>
        <position position="12"/>
    </location>
</feature>
<feature type="sequence conflict" description="In Ref. 3; AAA42011." evidence="7" ref="3">
    <original>D</original>
    <variation>H</variation>
    <location>
        <position position="47"/>
    </location>
</feature>
<accession>P08644</accession>
<accession>P46203</accession>
<accession>P97914</accession>
<organism>
    <name type="scientific">Rattus norvegicus</name>
    <name type="common">Rat</name>
    <dbReference type="NCBI Taxonomy" id="10116"/>
    <lineage>
        <taxon>Eukaryota</taxon>
        <taxon>Metazoa</taxon>
        <taxon>Chordata</taxon>
        <taxon>Craniata</taxon>
        <taxon>Vertebrata</taxon>
        <taxon>Euteleostomi</taxon>
        <taxon>Mammalia</taxon>
        <taxon>Eutheria</taxon>
        <taxon>Euarchontoglires</taxon>
        <taxon>Glires</taxon>
        <taxon>Rodentia</taxon>
        <taxon>Myomorpha</taxon>
        <taxon>Muroidea</taxon>
        <taxon>Muridae</taxon>
        <taxon>Murinae</taxon>
        <taxon>Rattus</taxon>
    </lineage>
</organism>
<evidence type="ECO:0000250" key="1">
    <source>
        <dbReference type="UniProtKB" id="P01112"/>
    </source>
</evidence>
<evidence type="ECO:0000250" key="2">
    <source>
        <dbReference type="UniProtKB" id="P01116"/>
    </source>
</evidence>
<evidence type="ECO:0000269" key="3">
    <source>
    </source>
</evidence>
<evidence type="ECO:0000269" key="4">
    <source>
    </source>
</evidence>
<evidence type="ECO:0000269" key="5">
    <source>
    </source>
</evidence>
<evidence type="ECO:0000303" key="6">
    <source>
    </source>
</evidence>
<evidence type="ECO:0000305" key="7"/>
<protein>
    <recommendedName>
        <fullName>GTPase KRas</fullName>
        <ecNumber evidence="2">3.6.5.2</ecNumber>
    </recommendedName>
    <alternativeName>
        <fullName>K-Ras 2</fullName>
    </alternativeName>
    <alternativeName>
        <fullName>Ki-Ras</fullName>
    </alternativeName>
    <alternativeName>
        <fullName>c-K-ras</fullName>
    </alternativeName>
    <alternativeName>
        <fullName>c-Ki-ras</fullName>
    </alternativeName>
    <component>
        <recommendedName>
            <fullName>GTPase KRas, N-terminally processed</fullName>
        </recommendedName>
    </component>
</protein>
<dbReference type="EC" id="3.6.5.2" evidence="2"/>
<dbReference type="EMBL" id="U09793">
    <property type="protein sequence ID" value="AAB60458.1"/>
    <property type="molecule type" value="mRNA"/>
</dbReference>
<dbReference type="EMBL" id="AABR03032592">
    <property type="status" value="NOT_ANNOTATED_CDS"/>
    <property type="molecule type" value="Genomic_DNA"/>
</dbReference>
<dbReference type="EMBL" id="M12260">
    <property type="protein sequence ID" value="AAA42011.1"/>
    <property type="molecule type" value="Genomic_DNA"/>
</dbReference>
<dbReference type="EMBL" id="M12259">
    <property type="protein sequence ID" value="AAA42011.1"/>
    <property type="status" value="JOINED"/>
    <property type="molecule type" value="Genomic_DNA"/>
</dbReference>
<dbReference type="EMBL" id="M54870">
    <property type="protein sequence ID" value="AAA40937.1"/>
    <property type="molecule type" value="Genomic_DNA"/>
</dbReference>
<dbReference type="EMBL" id="M16970">
    <property type="protein sequence ID" value="AAA41494.1"/>
    <property type="molecule type" value="Genomic_DNA"/>
</dbReference>
<dbReference type="PIR" id="I58402">
    <property type="entry name" value="I58402"/>
</dbReference>
<dbReference type="RefSeq" id="NP_113703.1">
    <molecule id="P08644-2"/>
    <property type="nucleotide sequence ID" value="NM_031515.3"/>
</dbReference>
<dbReference type="RefSeq" id="XP_008761576.1">
    <property type="nucleotide sequence ID" value="XM_008763354.2"/>
</dbReference>
<dbReference type="RefSeq" id="XP_017447931.1">
    <property type="nucleotide sequence ID" value="XM_017592442.1"/>
</dbReference>
<dbReference type="RefSeq" id="XP_017447932.1">
    <molecule id="P08644-1"/>
    <property type="nucleotide sequence ID" value="XM_017592443.3"/>
</dbReference>
<dbReference type="RefSeq" id="XP_038962950.1">
    <molecule id="P08644-1"/>
    <property type="nucleotide sequence ID" value="XM_039107022.2"/>
</dbReference>
<dbReference type="RefSeq" id="XP_038962951.1">
    <molecule id="P08644-2"/>
    <property type="nucleotide sequence ID" value="XM_039107023.2"/>
</dbReference>
<dbReference type="RefSeq" id="XP_063141593.1">
    <molecule id="P08644-2"/>
    <property type="nucleotide sequence ID" value="XM_063285523.1"/>
</dbReference>
<dbReference type="PDB" id="1N4S">
    <property type="method" value="X-ray"/>
    <property type="resolution" value="2.60 A"/>
    <property type="chains" value="M/N/O/P/Q/R=185-188"/>
</dbReference>
<dbReference type="PDBsum" id="1N4S"/>
<dbReference type="BMRB" id="P08644"/>
<dbReference type="SMR" id="P08644"/>
<dbReference type="BioGRID" id="246680">
    <property type="interactions" value="11"/>
</dbReference>
<dbReference type="FunCoup" id="P08644">
    <property type="interactions" value="3485"/>
</dbReference>
<dbReference type="IntAct" id="P08644">
    <property type="interactions" value="1"/>
</dbReference>
<dbReference type="MINT" id="P08644"/>
<dbReference type="STRING" id="10116.ENSRNOP00000012588"/>
<dbReference type="iPTMnet" id="P08644"/>
<dbReference type="PhosphoSitePlus" id="P08644"/>
<dbReference type="SwissPalm" id="P08644"/>
<dbReference type="jPOST" id="P08644"/>
<dbReference type="PaxDb" id="10116-ENSRNOP00000012588"/>
<dbReference type="GeneID" id="24525"/>
<dbReference type="KEGG" id="rno:24525"/>
<dbReference type="UCSC" id="RGD:2981">
    <molecule id="P08644-1"/>
    <property type="organism name" value="rat"/>
</dbReference>
<dbReference type="AGR" id="RGD:2981"/>
<dbReference type="CTD" id="3845"/>
<dbReference type="RGD" id="2981">
    <property type="gene designation" value="Kras"/>
</dbReference>
<dbReference type="VEuPathDB" id="HostDB:ENSRNOG00000069406"/>
<dbReference type="eggNOG" id="KOG0395">
    <property type="taxonomic scope" value="Eukaryota"/>
</dbReference>
<dbReference type="HOGENOM" id="CLU_041217_9_8_1"/>
<dbReference type="InParanoid" id="P08644"/>
<dbReference type="OrthoDB" id="5976022at2759"/>
<dbReference type="PhylomeDB" id="P08644"/>
<dbReference type="TreeFam" id="TF312796"/>
<dbReference type="Reactome" id="R-RNO-1169092">
    <property type="pathway name" value="Activation of RAS in B cells"/>
</dbReference>
<dbReference type="Reactome" id="R-RNO-1250347">
    <property type="pathway name" value="SHC1 events in ERBB4 signaling"/>
</dbReference>
<dbReference type="Reactome" id="R-RNO-1433557">
    <property type="pathway name" value="Signaling by SCF-KIT"/>
</dbReference>
<dbReference type="Reactome" id="R-RNO-171007">
    <property type="pathway name" value="p38MAPK events"/>
</dbReference>
<dbReference type="Reactome" id="R-RNO-179812">
    <property type="pathway name" value="GRB2 events in EGFR signaling"/>
</dbReference>
<dbReference type="Reactome" id="R-RNO-180336">
    <property type="pathway name" value="SHC1 events in EGFR signaling"/>
</dbReference>
<dbReference type="Reactome" id="R-RNO-186763">
    <property type="pathway name" value="Downstream signal transduction"/>
</dbReference>
<dbReference type="Reactome" id="R-RNO-1963640">
    <property type="pathway name" value="GRB2 events in ERBB2 signaling"/>
</dbReference>
<dbReference type="Reactome" id="R-RNO-210993">
    <property type="pathway name" value="Tie2 Signaling"/>
</dbReference>
<dbReference type="Reactome" id="R-RNO-2179392">
    <property type="pathway name" value="EGFR Transactivation by Gastrin"/>
</dbReference>
<dbReference type="Reactome" id="R-RNO-2424491">
    <property type="pathway name" value="DAP12 signaling"/>
</dbReference>
<dbReference type="Reactome" id="R-RNO-2871796">
    <property type="pathway name" value="FCERI mediated MAPK activation"/>
</dbReference>
<dbReference type="Reactome" id="R-RNO-375165">
    <property type="pathway name" value="NCAM signaling for neurite out-growth"/>
</dbReference>
<dbReference type="Reactome" id="R-RNO-4086398">
    <property type="pathway name" value="Ca2+ pathway"/>
</dbReference>
<dbReference type="Reactome" id="R-RNO-5218921">
    <property type="pathway name" value="VEGFR2 mediated cell proliferation"/>
</dbReference>
<dbReference type="Reactome" id="R-RNO-5621575">
    <property type="pathway name" value="CD209 (DC-SIGN) signaling"/>
</dbReference>
<dbReference type="Reactome" id="R-RNO-5654688">
    <property type="pathway name" value="SHC-mediated cascade:FGFR1"/>
</dbReference>
<dbReference type="Reactome" id="R-RNO-5654693">
    <property type="pathway name" value="FRS-mediated FGFR1 signaling"/>
</dbReference>
<dbReference type="Reactome" id="R-RNO-5654699">
    <property type="pathway name" value="SHC-mediated cascade:FGFR2"/>
</dbReference>
<dbReference type="Reactome" id="R-RNO-5654700">
    <property type="pathway name" value="FRS-mediated FGFR2 signaling"/>
</dbReference>
<dbReference type="Reactome" id="R-RNO-5654704">
    <property type="pathway name" value="SHC-mediated cascade:FGFR3"/>
</dbReference>
<dbReference type="Reactome" id="R-RNO-5654706">
    <property type="pathway name" value="FRS-mediated FGFR3 signaling"/>
</dbReference>
<dbReference type="Reactome" id="R-RNO-5654712">
    <property type="pathway name" value="FRS-mediated FGFR4 signaling"/>
</dbReference>
<dbReference type="Reactome" id="R-RNO-5654719">
    <property type="pathway name" value="SHC-mediated cascade:FGFR4"/>
</dbReference>
<dbReference type="Reactome" id="R-RNO-5658442">
    <property type="pathway name" value="Regulation of RAS by GAPs"/>
</dbReference>
<dbReference type="Reactome" id="R-RNO-5673000">
    <property type="pathway name" value="RAF activation"/>
</dbReference>
<dbReference type="Reactome" id="R-RNO-5673001">
    <property type="pathway name" value="RAF/MAP kinase cascade"/>
</dbReference>
<dbReference type="Reactome" id="R-RNO-5674135">
    <property type="pathway name" value="MAP2K and MAPK activation"/>
</dbReference>
<dbReference type="Reactome" id="R-RNO-5675221">
    <property type="pathway name" value="Negative regulation of MAPK pathway"/>
</dbReference>
<dbReference type="Reactome" id="R-RNO-8849471">
    <property type="pathway name" value="PTK6 Regulates RHO GTPases, RAS GTPase and MAP kinases"/>
</dbReference>
<dbReference type="Reactome" id="R-RNO-8851805">
    <property type="pathway name" value="MET activates RAS signaling"/>
</dbReference>
<dbReference type="Reactome" id="R-RNO-9607240">
    <property type="pathway name" value="FLT3 Signaling"/>
</dbReference>
<dbReference type="Reactome" id="R-RNO-9634635">
    <property type="pathway name" value="Estrogen-stimulated signaling through PRKCZ"/>
</dbReference>
<dbReference type="Reactome" id="R-RNO-9648002">
    <property type="pathway name" value="RAS processing"/>
</dbReference>
<dbReference type="Reactome" id="R-RNO-9674555">
    <property type="pathway name" value="Signaling by CSF3 (G-CSF)"/>
</dbReference>
<dbReference type="PRO" id="PR:P08644"/>
<dbReference type="Proteomes" id="UP000002494">
    <property type="component" value="Chromosome 4"/>
</dbReference>
<dbReference type="Bgee" id="ENSRNOG00000009338">
    <property type="expression patterns" value="Expressed in duodenum and 19 other cell types or tissues"/>
</dbReference>
<dbReference type="ExpressionAtlas" id="P08644">
    <property type="expression patterns" value="baseline and differential"/>
</dbReference>
<dbReference type="GO" id="GO:0005737">
    <property type="term" value="C:cytoplasm"/>
    <property type="evidence" value="ECO:0000266"/>
    <property type="project" value="RGD"/>
</dbReference>
<dbReference type="GO" id="GO:0009898">
    <property type="term" value="C:cytoplasmic side of plasma membrane"/>
    <property type="evidence" value="ECO:0000250"/>
    <property type="project" value="UniProtKB"/>
</dbReference>
<dbReference type="GO" id="GO:0005829">
    <property type="term" value="C:cytosol"/>
    <property type="evidence" value="ECO:0007669"/>
    <property type="project" value="UniProtKB-SubCell"/>
</dbReference>
<dbReference type="GO" id="GO:0012505">
    <property type="term" value="C:endomembrane system"/>
    <property type="evidence" value="ECO:0007669"/>
    <property type="project" value="UniProtKB-SubCell"/>
</dbReference>
<dbReference type="GO" id="GO:0016020">
    <property type="term" value="C:membrane"/>
    <property type="evidence" value="ECO:0000266"/>
    <property type="project" value="RGD"/>
</dbReference>
<dbReference type="GO" id="GO:0005886">
    <property type="term" value="C:plasma membrane"/>
    <property type="evidence" value="ECO:0000318"/>
    <property type="project" value="GO_Central"/>
</dbReference>
<dbReference type="GO" id="GO:0003925">
    <property type="term" value="F:G protein activity"/>
    <property type="evidence" value="ECO:0007669"/>
    <property type="project" value="UniProtKB-EC"/>
</dbReference>
<dbReference type="GO" id="GO:0019003">
    <property type="term" value="F:GDP binding"/>
    <property type="evidence" value="ECO:0000314"/>
    <property type="project" value="RGD"/>
</dbReference>
<dbReference type="GO" id="GO:0019002">
    <property type="term" value="F:GMP binding"/>
    <property type="evidence" value="ECO:0000314"/>
    <property type="project" value="RGD"/>
</dbReference>
<dbReference type="GO" id="GO:0005525">
    <property type="term" value="F:GTP binding"/>
    <property type="evidence" value="ECO:0000318"/>
    <property type="project" value="GO_Central"/>
</dbReference>
<dbReference type="GO" id="GO:0003924">
    <property type="term" value="F:GTPase activity"/>
    <property type="evidence" value="ECO:0000266"/>
    <property type="project" value="RGD"/>
</dbReference>
<dbReference type="GO" id="GO:0030275">
    <property type="term" value="F:LRR domain binding"/>
    <property type="evidence" value="ECO:0000314"/>
    <property type="project" value="RGD"/>
</dbReference>
<dbReference type="GO" id="GO:0044877">
    <property type="term" value="F:protein-containing complex binding"/>
    <property type="evidence" value="ECO:0000266"/>
    <property type="project" value="RGD"/>
</dbReference>
<dbReference type="GO" id="GO:0043495">
    <property type="term" value="F:protein-membrane adaptor activity"/>
    <property type="evidence" value="ECO:0000266"/>
    <property type="project" value="RGD"/>
</dbReference>
<dbReference type="GO" id="GO:0030036">
    <property type="term" value="P:actin cytoskeleton organization"/>
    <property type="evidence" value="ECO:0000266"/>
    <property type="project" value="RGD"/>
</dbReference>
<dbReference type="GO" id="GO:0060038">
    <property type="term" value="P:cardiac muscle cell proliferation"/>
    <property type="evidence" value="ECO:0000270"/>
    <property type="project" value="RGD"/>
</dbReference>
<dbReference type="GO" id="GO:0008283">
    <property type="term" value="P:cell population proliferation"/>
    <property type="evidence" value="ECO:0000266"/>
    <property type="project" value="RGD"/>
</dbReference>
<dbReference type="GO" id="GO:0019221">
    <property type="term" value="P:cytokine-mediated signaling pathway"/>
    <property type="evidence" value="ECO:0000315"/>
    <property type="project" value="RGD"/>
</dbReference>
<dbReference type="GO" id="GO:0060441">
    <property type="term" value="P:epithelial tube branching involved in lung morphogenesis"/>
    <property type="evidence" value="ECO:0000266"/>
    <property type="project" value="RGD"/>
</dbReference>
<dbReference type="GO" id="GO:0007565">
    <property type="term" value="P:female pregnancy"/>
    <property type="evidence" value="ECO:0000270"/>
    <property type="project" value="RGD"/>
</dbReference>
<dbReference type="GO" id="GO:0021897">
    <property type="term" value="P:forebrain astrocyte development"/>
    <property type="evidence" value="ECO:0000266"/>
    <property type="project" value="RGD"/>
</dbReference>
<dbReference type="GO" id="GO:0010467">
    <property type="term" value="P:gene expression"/>
    <property type="evidence" value="ECO:0000266"/>
    <property type="project" value="RGD"/>
</dbReference>
<dbReference type="GO" id="GO:0014009">
    <property type="term" value="P:glial cell proliferation"/>
    <property type="evidence" value="ECO:0000266"/>
    <property type="project" value="RGD"/>
</dbReference>
<dbReference type="GO" id="GO:0048873">
    <property type="term" value="P:homeostasis of number of cells within a tissue"/>
    <property type="evidence" value="ECO:0000266"/>
    <property type="project" value="RGD"/>
</dbReference>
<dbReference type="GO" id="GO:0001889">
    <property type="term" value="P:liver development"/>
    <property type="evidence" value="ECO:0000270"/>
    <property type="project" value="RGD"/>
</dbReference>
<dbReference type="GO" id="GO:0051450">
    <property type="term" value="P:myoblast proliferation"/>
    <property type="evidence" value="ECO:0000270"/>
    <property type="project" value="RGD"/>
</dbReference>
<dbReference type="GO" id="GO:0030857">
    <property type="term" value="P:negative regulation of epithelial cell differentiation"/>
    <property type="evidence" value="ECO:0000266"/>
    <property type="project" value="RGD"/>
</dbReference>
<dbReference type="GO" id="GO:0043524">
    <property type="term" value="P:negative regulation of neuron apoptotic process"/>
    <property type="evidence" value="ECO:0000266"/>
    <property type="project" value="RGD"/>
</dbReference>
<dbReference type="GO" id="GO:0051402">
    <property type="term" value="P:neuron apoptotic process"/>
    <property type="evidence" value="ECO:0000266"/>
    <property type="project" value="RGD"/>
</dbReference>
<dbReference type="GO" id="GO:2000774">
    <property type="term" value="P:positive regulation of cellular senescence"/>
    <property type="evidence" value="ECO:0000315"/>
    <property type="project" value="RGD"/>
</dbReference>
<dbReference type="GO" id="GO:0010628">
    <property type="term" value="P:positive regulation of gene expression"/>
    <property type="evidence" value="ECO:0000266"/>
    <property type="project" value="RGD"/>
</dbReference>
<dbReference type="GO" id="GO:0060252">
    <property type="term" value="P:positive regulation of glial cell proliferation"/>
    <property type="evidence" value="ECO:0000266"/>
    <property type="project" value="RGD"/>
</dbReference>
<dbReference type="GO" id="GO:0035022">
    <property type="term" value="P:positive regulation of Rac protein signal transduction"/>
    <property type="evidence" value="ECO:0000266"/>
    <property type="project" value="RGD"/>
</dbReference>
<dbReference type="GO" id="GO:0016601">
    <property type="term" value="P:Rac protein signal transduction"/>
    <property type="evidence" value="ECO:0000266"/>
    <property type="project" value="RGD"/>
</dbReference>
<dbReference type="GO" id="GO:0007265">
    <property type="term" value="P:Ras protein signal transduction"/>
    <property type="evidence" value="ECO:0000266"/>
    <property type="project" value="RGD"/>
</dbReference>
<dbReference type="GO" id="GO:0048169">
    <property type="term" value="P:regulation of long-term neuronal synaptic plasticity"/>
    <property type="evidence" value="ECO:0000266"/>
    <property type="project" value="RGD"/>
</dbReference>
<dbReference type="GO" id="GO:0032228">
    <property type="term" value="P:regulation of synaptic transmission, GABAergic"/>
    <property type="evidence" value="ECO:0000266"/>
    <property type="project" value="RGD"/>
</dbReference>
<dbReference type="GO" id="GO:0051384">
    <property type="term" value="P:response to glucocorticoid"/>
    <property type="evidence" value="ECO:0000270"/>
    <property type="project" value="RGD"/>
</dbReference>
<dbReference type="GO" id="GO:0009629">
    <property type="term" value="P:response to gravity"/>
    <property type="evidence" value="ECO:0000270"/>
    <property type="project" value="RGD"/>
</dbReference>
<dbReference type="GO" id="GO:0035900">
    <property type="term" value="P:response to isolation stress"/>
    <property type="evidence" value="ECO:0000270"/>
    <property type="project" value="RGD"/>
</dbReference>
<dbReference type="GO" id="GO:0051385">
    <property type="term" value="P:response to mineralocorticoid"/>
    <property type="evidence" value="ECO:0000270"/>
    <property type="project" value="RGD"/>
</dbReference>
<dbReference type="GO" id="GO:0035914">
    <property type="term" value="P:skeletal muscle cell differentiation"/>
    <property type="evidence" value="ECO:0000266"/>
    <property type="project" value="RGD"/>
</dbReference>
<dbReference type="GO" id="GO:0051146">
    <property type="term" value="P:striated muscle cell differentiation"/>
    <property type="evidence" value="ECO:0000266"/>
    <property type="project" value="RGD"/>
</dbReference>
<dbReference type="GO" id="GO:0060509">
    <property type="term" value="P:type I pneumocyte differentiation"/>
    <property type="evidence" value="ECO:0000266"/>
    <property type="project" value="RGD"/>
</dbReference>
<dbReference type="GO" id="GO:0008542">
    <property type="term" value="P:visual learning"/>
    <property type="evidence" value="ECO:0000266"/>
    <property type="project" value="RGD"/>
</dbReference>
<dbReference type="CDD" id="cd04138">
    <property type="entry name" value="H_N_K_Ras_like"/>
    <property type="match status" value="1"/>
</dbReference>
<dbReference type="FunFam" id="3.40.50.300:FF:000096">
    <property type="entry name" value="KRAS proto-oncogene, GTPase"/>
    <property type="match status" value="1"/>
</dbReference>
<dbReference type="Gene3D" id="3.40.50.300">
    <property type="entry name" value="P-loop containing nucleotide triphosphate hydrolases"/>
    <property type="match status" value="1"/>
</dbReference>
<dbReference type="InterPro" id="IPR027417">
    <property type="entry name" value="P-loop_NTPase"/>
</dbReference>
<dbReference type="InterPro" id="IPR005225">
    <property type="entry name" value="Small_GTP-bd"/>
</dbReference>
<dbReference type="InterPro" id="IPR001806">
    <property type="entry name" value="Small_GTPase"/>
</dbReference>
<dbReference type="InterPro" id="IPR020849">
    <property type="entry name" value="Small_GTPase_Ras-type"/>
</dbReference>
<dbReference type="NCBIfam" id="TIGR00231">
    <property type="entry name" value="small_GTP"/>
    <property type="match status" value="1"/>
</dbReference>
<dbReference type="PANTHER" id="PTHR24070">
    <property type="entry name" value="RAS, DI-RAS, AND RHEB FAMILY MEMBERS OF SMALL GTPASE SUPERFAMILY"/>
    <property type="match status" value="1"/>
</dbReference>
<dbReference type="Pfam" id="PF00071">
    <property type="entry name" value="Ras"/>
    <property type="match status" value="1"/>
</dbReference>
<dbReference type="PRINTS" id="PR00449">
    <property type="entry name" value="RASTRNSFRMNG"/>
</dbReference>
<dbReference type="SMART" id="SM00175">
    <property type="entry name" value="RAB"/>
    <property type="match status" value="1"/>
</dbReference>
<dbReference type="SMART" id="SM00176">
    <property type="entry name" value="RAN"/>
    <property type="match status" value="1"/>
</dbReference>
<dbReference type="SMART" id="SM00173">
    <property type="entry name" value="RAS"/>
    <property type="match status" value="1"/>
</dbReference>
<dbReference type="SMART" id="SM00174">
    <property type="entry name" value="RHO"/>
    <property type="match status" value="1"/>
</dbReference>
<dbReference type="SUPFAM" id="SSF52540">
    <property type="entry name" value="P-loop containing nucleoside triphosphate hydrolases"/>
    <property type="match status" value="1"/>
</dbReference>
<dbReference type="PROSITE" id="PS51421">
    <property type="entry name" value="RAS"/>
    <property type="match status" value="1"/>
</dbReference>
<keyword id="KW-0002">3D-structure</keyword>
<keyword id="KW-0007">Acetylation</keyword>
<keyword id="KW-0025">Alternative splicing</keyword>
<keyword id="KW-1003">Cell membrane</keyword>
<keyword id="KW-0963">Cytoplasm</keyword>
<keyword id="KW-0342">GTP-binding</keyword>
<keyword id="KW-0378">Hydrolase</keyword>
<keyword id="KW-1017">Isopeptide bond</keyword>
<keyword id="KW-0449">Lipoprotein</keyword>
<keyword id="KW-0472">Membrane</keyword>
<keyword id="KW-0488">Methylation</keyword>
<keyword id="KW-0547">Nucleotide-binding</keyword>
<keyword id="KW-0564">Palmitate</keyword>
<keyword id="KW-0636">Prenylation</keyword>
<keyword id="KW-0656">Proto-oncogene</keyword>
<keyword id="KW-1185">Reference proteome</keyword>
<keyword id="KW-0832">Ubl conjugation</keyword>
<comment type="function">
    <text evidence="2 5">Ras proteins bind GDP/GTP and possess intrinsic GTPase activity (By similarity). Plays an important role in the regulation of cell proliferation (PubMed:3110778). Plays a role in promoting oncogenic events by inducing transcriptional silencing of tumor suppressor genes (TSGs) in colorectal cancer (CRC) cells in a ZNF304-dependent manner (By similarity).</text>
</comment>
<comment type="catalytic activity">
    <reaction evidence="2">
        <text>GTP + H2O = GDP + phosphate + H(+)</text>
        <dbReference type="Rhea" id="RHEA:19669"/>
        <dbReference type="ChEBI" id="CHEBI:15377"/>
        <dbReference type="ChEBI" id="CHEBI:15378"/>
        <dbReference type="ChEBI" id="CHEBI:37565"/>
        <dbReference type="ChEBI" id="CHEBI:43474"/>
        <dbReference type="ChEBI" id="CHEBI:58189"/>
        <dbReference type="EC" id="3.6.5.2"/>
    </reaction>
</comment>
<comment type="activity regulation">
    <text evidence="2">Alternates between an inactive form bound to GDP and an active form bound to GTP (By similarity). Activated by a guanine nucleotide-exchange factor (GEF) and inactivated by a GTPase-activating protein (GAP) (By similarity). Interaction with SOS1 promotes exchange of bound GDP to GTP (By similarity).</text>
</comment>
<comment type="subunit">
    <text evidence="2 3 4">Interacts with PHLPP (PubMed:12594205). Interacts (active GTP-bound form preferentially) with RGS14 (PubMed:19319189). Interacts (when farnesylated) with PDE6D; this promotes dissociation from the cell membrane (By similarity). Interacts with SOS1 (By similarity). Interacts (when farnesylated) with GPR31 (By similarity). Interacts with RAP1GDS1 (By similarity). Interacts (active GTP-bound form) with both SHOC2 and PP1c (all isoforms) to form a tertiary complex; SHOC2 and PP1c preferably bind M-Ras/MRAS, but they also bind K-Ras/KRAS, N-Ras/NRAS and H-Ras/HRAS (By similarity). Interacts (GTP-bound form) with MAPKAP1/SIN1; inhibiting K-Ras/KRAS activity (By similarity).</text>
</comment>
<comment type="subunit">
    <molecule>Isoform 2B</molecule>
    <text evidence="2">Interacts (when farnesylated) with GPR31.</text>
</comment>
<comment type="subcellular location">
    <subcellularLocation>
        <location evidence="2">Cell membrane</location>
        <topology evidence="2">Lipid-anchor</topology>
        <orientation evidence="2">Cytoplasmic side</orientation>
    </subcellularLocation>
    <subcellularLocation>
        <location evidence="2">Endomembrane system</location>
    </subcellularLocation>
    <subcellularLocation>
        <location evidence="2">Cytoplasm</location>
        <location evidence="2">Cytosol</location>
    </subcellularLocation>
</comment>
<comment type="subcellular location">
    <molecule>Isoform 2B</molecule>
    <subcellularLocation>
        <location evidence="2">Cell membrane</location>
        <topology evidence="2">Lipid-anchor</topology>
    </subcellularLocation>
</comment>
<comment type="alternative products">
    <event type="alternative splicing"/>
    <isoform>
        <id>P08644-1</id>
        <name>2A</name>
        <sequence type="displayed"/>
    </isoform>
    <isoform>
        <id>P08644-2</id>
        <id>P46203-1</id>
        <name>2B</name>
        <sequence type="described" ref="VSP_011144 VSP_011145"/>
    </isoform>
    <text>Isoforms differ in the C-terminal region which is encoded by two alternative exons (IVA and IVB).</text>
</comment>
<comment type="PTM">
    <text evidence="2">Acetylation at Lys-104 prevents interaction with guanine nucleotide exchange factors (GEFs).</text>
</comment>
<comment type="PTM">
    <text evidence="1">Ubiquitinated by the BCR(LZTR1) E3 ubiquitin ligase complex at Lys-170 in a non-degradative manner, leading to inhibit Ras signaling by decreasing Ras association with membranes.</text>
</comment>
<comment type="PTM">
    <text evidence="2">Palmitoylated at Lys-182, Lys-184 and Lys-185. Lysine-depalmitoylation by SIRT2 promotes its localization to endomembranes in endocytic pathways.</text>
</comment>
<comment type="similarity">
    <text evidence="7">Belongs to the small GTPase superfamily. Ras family.</text>
</comment>
<gene>
    <name type="primary">Kras</name>
    <name type="synonym">Kras2</name>
</gene>
<name>RASK_RAT</name>
<sequence>MTEYKLVVVGAGGVGKSALTIQLIQNHFVDEYDPTIEDSYRKQVVIDGETCLLDILDTAGQEEYSAMRDQYMRTGEGFLCVFAINNTKSFEDIHHYREQIKRVKDSEDVPMVLVGNKCDLPSRTVDTKQAQELARSYGIPFIETSAKTRQRVEDAFYTLVREIRQYRLKKISKEEKTPGCVKIKKCVIM</sequence>
<proteinExistence type="evidence at protein level"/>